<dbReference type="EMBL" id="AE017340">
    <property type="protein sequence ID" value="AAV82349.1"/>
    <property type="molecule type" value="Genomic_DNA"/>
</dbReference>
<dbReference type="RefSeq" id="WP_011234754.1">
    <property type="nucleotide sequence ID" value="NC_006512.1"/>
</dbReference>
<dbReference type="SMR" id="Q5QU38"/>
<dbReference type="STRING" id="283942.IL1511"/>
<dbReference type="GeneID" id="41336688"/>
<dbReference type="KEGG" id="ilo:IL1511"/>
<dbReference type="eggNOG" id="COG2835">
    <property type="taxonomic scope" value="Bacteria"/>
</dbReference>
<dbReference type="HOGENOM" id="CLU_155659_3_1_6"/>
<dbReference type="OrthoDB" id="9812205at2"/>
<dbReference type="Proteomes" id="UP000001171">
    <property type="component" value="Chromosome"/>
</dbReference>
<dbReference type="GO" id="GO:0005829">
    <property type="term" value="C:cytosol"/>
    <property type="evidence" value="ECO:0007669"/>
    <property type="project" value="TreeGrafter"/>
</dbReference>
<dbReference type="FunFam" id="2.20.25.10:FF:000002">
    <property type="entry name" value="UPF0434 protein YcaR"/>
    <property type="match status" value="1"/>
</dbReference>
<dbReference type="Gene3D" id="2.20.25.10">
    <property type="match status" value="1"/>
</dbReference>
<dbReference type="HAMAP" id="MF_01187">
    <property type="entry name" value="UPF0434"/>
    <property type="match status" value="1"/>
</dbReference>
<dbReference type="InterPro" id="IPR005651">
    <property type="entry name" value="Trm112-like"/>
</dbReference>
<dbReference type="PANTHER" id="PTHR33505:SF4">
    <property type="entry name" value="PROTEIN PREY, MITOCHONDRIAL"/>
    <property type="match status" value="1"/>
</dbReference>
<dbReference type="PANTHER" id="PTHR33505">
    <property type="entry name" value="ZGC:162634"/>
    <property type="match status" value="1"/>
</dbReference>
<dbReference type="Pfam" id="PF03966">
    <property type="entry name" value="Trm112p"/>
    <property type="match status" value="1"/>
</dbReference>
<dbReference type="SUPFAM" id="SSF158997">
    <property type="entry name" value="Trm112p-like"/>
    <property type="match status" value="1"/>
</dbReference>
<reference key="1">
    <citation type="journal article" date="2004" name="Proc. Natl. Acad. Sci. U.S.A.">
        <title>Genome sequence of the deep-sea gamma-proteobacterium Idiomarina loihiensis reveals amino acid fermentation as a source of carbon and energy.</title>
        <authorList>
            <person name="Hou S."/>
            <person name="Saw J.H."/>
            <person name="Lee K.S."/>
            <person name="Freitas T.A."/>
            <person name="Belisle C."/>
            <person name="Kawarabayasi Y."/>
            <person name="Donachie S.P."/>
            <person name="Pikina A."/>
            <person name="Galperin M.Y."/>
            <person name="Koonin E.V."/>
            <person name="Makarova K.S."/>
            <person name="Omelchenko M.V."/>
            <person name="Sorokin A."/>
            <person name="Wolf Y.I."/>
            <person name="Li Q.X."/>
            <person name="Keum Y.S."/>
            <person name="Campbell S."/>
            <person name="Denery J."/>
            <person name="Aizawa S."/>
            <person name="Shibata S."/>
            <person name="Malahoff A."/>
            <person name="Alam M."/>
        </authorList>
    </citation>
    <scope>NUCLEOTIDE SEQUENCE [LARGE SCALE GENOMIC DNA]</scope>
    <source>
        <strain>ATCC BAA-735 / DSM 15497 / L2-TR</strain>
    </source>
</reference>
<comment type="similarity">
    <text evidence="1">Belongs to the UPF0434 family.</text>
</comment>
<gene>
    <name type="ordered locus">IL1511</name>
</gene>
<keyword id="KW-1185">Reference proteome</keyword>
<sequence length="65" mass="7240">MAIDKTTLAILACPKCKGKLTYYADKDELVCRGERLAYPIDENIPVLIADKARELSSEELEKVPS</sequence>
<organism>
    <name type="scientific">Idiomarina loihiensis (strain ATCC BAA-735 / DSM 15497 / L2-TR)</name>
    <dbReference type="NCBI Taxonomy" id="283942"/>
    <lineage>
        <taxon>Bacteria</taxon>
        <taxon>Pseudomonadati</taxon>
        <taxon>Pseudomonadota</taxon>
        <taxon>Gammaproteobacteria</taxon>
        <taxon>Alteromonadales</taxon>
        <taxon>Idiomarinaceae</taxon>
        <taxon>Idiomarina</taxon>
    </lineage>
</organism>
<evidence type="ECO:0000255" key="1">
    <source>
        <dbReference type="HAMAP-Rule" id="MF_01187"/>
    </source>
</evidence>
<name>Y1511_IDILO</name>
<feature type="chain" id="PRO_0000291102" description="UPF0434 protein IL1511">
    <location>
        <begin position="1"/>
        <end position="65"/>
    </location>
</feature>
<accession>Q5QU38</accession>
<proteinExistence type="inferred from homology"/>
<protein>
    <recommendedName>
        <fullName evidence="1">UPF0434 protein IL1511</fullName>
    </recommendedName>
</protein>